<name>HPRK_CLOB8</name>
<evidence type="ECO:0000255" key="1">
    <source>
        <dbReference type="HAMAP-Rule" id="MF_01249"/>
    </source>
</evidence>
<reference key="1">
    <citation type="submission" date="2007-06" db="EMBL/GenBank/DDBJ databases">
        <title>Complete sequence of Clostridium beijerinckii NCIMB 8052.</title>
        <authorList>
            <consortium name="US DOE Joint Genome Institute"/>
            <person name="Copeland A."/>
            <person name="Lucas S."/>
            <person name="Lapidus A."/>
            <person name="Barry K."/>
            <person name="Detter J.C."/>
            <person name="Glavina del Rio T."/>
            <person name="Hammon N."/>
            <person name="Israni S."/>
            <person name="Dalin E."/>
            <person name="Tice H."/>
            <person name="Pitluck S."/>
            <person name="Sims D."/>
            <person name="Brettin T."/>
            <person name="Bruce D."/>
            <person name="Tapia R."/>
            <person name="Brainard J."/>
            <person name="Schmutz J."/>
            <person name="Larimer F."/>
            <person name="Land M."/>
            <person name="Hauser L."/>
            <person name="Kyrpides N."/>
            <person name="Mikhailova N."/>
            <person name="Bennet G."/>
            <person name="Cann I."/>
            <person name="Chen J.-S."/>
            <person name="Contreras A.L."/>
            <person name="Jones D."/>
            <person name="Kashket E."/>
            <person name="Mitchell W."/>
            <person name="Stoddard S."/>
            <person name="Schwarz W."/>
            <person name="Qureshi N."/>
            <person name="Young M."/>
            <person name="Shi Z."/>
            <person name="Ezeji T."/>
            <person name="White B."/>
            <person name="Blaschek H."/>
            <person name="Richardson P."/>
        </authorList>
    </citation>
    <scope>NUCLEOTIDE SEQUENCE [LARGE SCALE GENOMIC DNA]</scope>
    <source>
        <strain>ATCC 51743 / NCIMB 8052</strain>
    </source>
</reference>
<proteinExistence type="inferred from homology"/>
<comment type="function">
    <text evidence="1">Catalyzes the ATP- as well as the pyrophosphate-dependent phosphorylation of a specific serine residue in HPr, a phosphocarrier protein of the phosphoenolpyruvate-dependent sugar phosphotransferase system (PTS). HprK/P also catalyzes the pyrophosphate-producing, inorganic phosphate-dependent dephosphorylation (phosphorolysis) of seryl-phosphorylated HPr (P-Ser-HPr). The two antagonistic activities of HprK/P are regulated by several intracellular metabolites, which change their concentration in response to the absence or presence of rapidly metabolisable carbon sources (glucose, fructose, etc.) in the growth medium. Therefore, by controlling the phosphorylation state of HPr, HPrK/P is a sensor enzyme that plays a major role in the regulation of carbon metabolism and sugar transport: it mediates carbon catabolite repression (CCR), and regulates PTS-catalyzed carbohydrate uptake and inducer exclusion.</text>
</comment>
<comment type="catalytic activity">
    <reaction evidence="1">
        <text>[HPr protein]-L-serine + ATP = [HPr protein]-O-phospho-L-serine + ADP + H(+)</text>
        <dbReference type="Rhea" id="RHEA:46600"/>
        <dbReference type="Rhea" id="RHEA-COMP:11602"/>
        <dbReference type="Rhea" id="RHEA-COMP:11603"/>
        <dbReference type="ChEBI" id="CHEBI:15378"/>
        <dbReference type="ChEBI" id="CHEBI:29999"/>
        <dbReference type="ChEBI" id="CHEBI:30616"/>
        <dbReference type="ChEBI" id="CHEBI:83421"/>
        <dbReference type="ChEBI" id="CHEBI:456216"/>
    </reaction>
</comment>
<comment type="catalytic activity">
    <reaction evidence="1">
        <text>[HPr protein]-O-phospho-L-serine + phosphate + H(+) = [HPr protein]-L-serine + diphosphate</text>
        <dbReference type="Rhea" id="RHEA:46604"/>
        <dbReference type="Rhea" id="RHEA-COMP:11602"/>
        <dbReference type="Rhea" id="RHEA-COMP:11603"/>
        <dbReference type="ChEBI" id="CHEBI:15378"/>
        <dbReference type="ChEBI" id="CHEBI:29999"/>
        <dbReference type="ChEBI" id="CHEBI:33019"/>
        <dbReference type="ChEBI" id="CHEBI:43474"/>
        <dbReference type="ChEBI" id="CHEBI:83421"/>
    </reaction>
</comment>
<comment type="cofactor">
    <cofactor evidence="1">
        <name>Mg(2+)</name>
        <dbReference type="ChEBI" id="CHEBI:18420"/>
    </cofactor>
</comment>
<comment type="subunit">
    <text evidence="1">Homohexamer.</text>
</comment>
<comment type="domain">
    <text evidence="1">The Walker A ATP-binding motif also binds Pi and PPi.</text>
</comment>
<comment type="miscellaneous">
    <text evidence="1">Both phosphorylation and phosphorolysis are carried out by the same active site and suggest a common mechanism for both reactions.</text>
</comment>
<comment type="similarity">
    <text evidence="1">Belongs to the HPrK/P family.</text>
</comment>
<sequence>MGVLVKKLIDDLNLEVLVEGKEDVEISVNDINRPGLQLAGFYNYFAPERIQVIGKAEWSFLDYMQIELRKKRVKKYFSFDINCLIITRGLEPHPEFIKEAKKHNIWFVRSNLVTTQFISKTTIYLADKLAPETRLHGVLVDVSGIGILITGESGIGKSETALELIKRGHRLVTDDAVDIKDIDGQLIGRSPKITVGMLEVRGLGIIDVTTLYGLSSVVQEKEIRLVMHFEHWKDDNDYDRLGIDNEYMNILGINVKKLTVPIRPGRNIAVIIEAAAVNYRHALMSKITPVDVIENRMNELND</sequence>
<protein>
    <recommendedName>
        <fullName evidence="1">HPr kinase/phosphorylase</fullName>
        <shortName evidence="1">HPrK/P</shortName>
        <ecNumber evidence="1">2.7.11.-</ecNumber>
        <ecNumber evidence="1">2.7.4.-</ecNumber>
    </recommendedName>
    <alternativeName>
        <fullName evidence="1">HPr(Ser) kinase/phosphorylase</fullName>
    </alternativeName>
</protein>
<accession>A6LTA6</accession>
<feature type="chain" id="PRO_1000085791" description="HPr kinase/phosphorylase">
    <location>
        <begin position="1"/>
        <end position="302"/>
    </location>
</feature>
<feature type="region of interest" description="Important for the catalytic mechanism of both phosphorylation and dephosphorylation" evidence="1">
    <location>
        <begin position="198"/>
        <end position="207"/>
    </location>
</feature>
<feature type="region of interest" description="Important for the catalytic mechanism of dephosphorylation" evidence="1">
    <location>
        <begin position="261"/>
        <end position="266"/>
    </location>
</feature>
<feature type="active site" evidence="1">
    <location>
        <position position="136"/>
    </location>
</feature>
<feature type="active site" evidence="1">
    <location>
        <position position="157"/>
    </location>
</feature>
<feature type="active site" description="Proton acceptor; for phosphorylation activity. Proton donor; for dephosphorylation activity" evidence="1">
    <location>
        <position position="175"/>
    </location>
</feature>
<feature type="active site" evidence="1">
    <location>
        <position position="240"/>
    </location>
</feature>
<feature type="binding site" evidence="1">
    <location>
        <begin position="151"/>
        <end position="158"/>
    </location>
    <ligand>
        <name>ATP</name>
        <dbReference type="ChEBI" id="CHEBI:30616"/>
    </ligand>
</feature>
<feature type="binding site" evidence="1">
    <location>
        <position position="158"/>
    </location>
    <ligand>
        <name>Mg(2+)</name>
        <dbReference type="ChEBI" id="CHEBI:18420"/>
    </ligand>
</feature>
<feature type="binding site" evidence="1">
    <location>
        <position position="199"/>
    </location>
    <ligand>
        <name>Mg(2+)</name>
        <dbReference type="ChEBI" id="CHEBI:18420"/>
    </ligand>
</feature>
<keyword id="KW-0067">ATP-binding</keyword>
<keyword id="KW-0119">Carbohydrate metabolism</keyword>
<keyword id="KW-0418">Kinase</keyword>
<keyword id="KW-0460">Magnesium</keyword>
<keyword id="KW-0479">Metal-binding</keyword>
<keyword id="KW-0511">Multifunctional enzyme</keyword>
<keyword id="KW-0547">Nucleotide-binding</keyword>
<keyword id="KW-0723">Serine/threonine-protein kinase</keyword>
<keyword id="KW-0808">Transferase</keyword>
<dbReference type="EC" id="2.7.11.-" evidence="1"/>
<dbReference type="EC" id="2.7.4.-" evidence="1"/>
<dbReference type="EMBL" id="CP000721">
    <property type="protein sequence ID" value="ABR33586.1"/>
    <property type="molecule type" value="Genomic_DNA"/>
</dbReference>
<dbReference type="RefSeq" id="WP_011968740.1">
    <property type="nucleotide sequence ID" value="NC_009617.1"/>
</dbReference>
<dbReference type="SMR" id="A6LTA6"/>
<dbReference type="GeneID" id="66344361"/>
<dbReference type="KEGG" id="cbe:Cbei_1408"/>
<dbReference type="eggNOG" id="COG1493">
    <property type="taxonomic scope" value="Bacteria"/>
</dbReference>
<dbReference type="HOGENOM" id="CLU_052030_0_1_9"/>
<dbReference type="Proteomes" id="UP000000565">
    <property type="component" value="Chromosome"/>
</dbReference>
<dbReference type="GO" id="GO:0005524">
    <property type="term" value="F:ATP binding"/>
    <property type="evidence" value="ECO:0007669"/>
    <property type="project" value="UniProtKB-UniRule"/>
</dbReference>
<dbReference type="GO" id="GO:0000287">
    <property type="term" value="F:magnesium ion binding"/>
    <property type="evidence" value="ECO:0007669"/>
    <property type="project" value="UniProtKB-UniRule"/>
</dbReference>
<dbReference type="GO" id="GO:0000155">
    <property type="term" value="F:phosphorelay sensor kinase activity"/>
    <property type="evidence" value="ECO:0007669"/>
    <property type="project" value="InterPro"/>
</dbReference>
<dbReference type="GO" id="GO:0004674">
    <property type="term" value="F:protein serine/threonine kinase activity"/>
    <property type="evidence" value="ECO:0007669"/>
    <property type="project" value="UniProtKB-KW"/>
</dbReference>
<dbReference type="GO" id="GO:0004712">
    <property type="term" value="F:protein serine/threonine/tyrosine kinase activity"/>
    <property type="evidence" value="ECO:0007669"/>
    <property type="project" value="UniProtKB-UniRule"/>
</dbReference>
<dbReference type="GO" id="GO:0006109">
    <property type="term" value="P:regulation of carbohydrate metabolic process"/>
    <property type="evidence" value="ECO:0007669"/>
    <property type="project" value="UniProtKB-UniRule"/>
</dbReference>
<dbReference type="CDD" id="cd01918">
    <property type="entry name" value="HprK_C"/>
    <property type="match status" value="1"/>
</dbReference>
<dbReference type="FunFam" id="3.40.50.300:FF:000174">
    <property type="entry name" value="HPr kinase/phosphorylase"/>
    <property type="match status" value="1"/>
</dbReference>
<dbReference type="Gene3D" id="3.40.1390.20">
    <property type="entry name" value="HprK N-terminal domain-like"/>
    <property type="match status" value="1"/>
</dbReference>
<dbReference type="Gene3D" id="3.40.50.300">
    <property type="entry name" value="P-loop containing nucleotide triphosphate hydrolases"/>
    <property type="match status" value="1"/>
</dbReference>
<dbReference type="HAMAP" id="MF_01249">
    <property type="entry name" value="HPr_kinase"/>
    <property type="match status" value="1"/>
</dbReference>
<dbReference type="InterPro" id="IPR003755">
    <property type="entry name" value="HPr(Ser)_kin/Pase"/>
</dbReference>
<dbReference type="InterPro" id="IPR011104">
    <property type="entry name" value="Hpr_kin/Pase_C"/>
</dbReference>
<dbReference type="InterPro" id="IPR011126">
    <property type="entry name" value="Hpr_kin/Pase_Hpr_N"/>
</dbReference>
<dbReference type="InterPro" id="IPR027417">
    <property type="entry name" value="P-loop_NTPase"/>
</dbReference>
<dbReference type="InterPro" id="IPR028979">
    <property type="entry name" value="Ser_kin/Pase_Hpr-like_N_sf"/>
</dbReference>
<dbReference type="NCBIfam" id="TIGR00679">
    <property type="entry name" value="hpr-ser"/>
    <property type="match status" value="1"/>
</dbReference>
<dbReference type="PANTHER" id="PTHR30305:SF1">
    <property type="entry name" value="HPR KINASE_PHOSPHORYLASE"/>
    <property type="match status" value="1"/>
</dbReference>
<dbReference type="PANTHER" id="PTHR30305">
    <property type="entry name" value="PROTEIN YJDM-RELATED"/>
    <property type="match status" value="1"/>
</dbReference>
<dbReference type="Pfam" id="PF07475">
    <property type="entry name" value="Hpr_kinase_C"/>
    <property type="match status" value="1"/>
</dbReference>
<dbReference type="Pfam" id="PF02603">
    <property type="entry name" value="Hpr_kinase_N"/>
    <property type="match status" value="1"/>
</dbReference>
<dbReference type="SUPFAM" id="SSF75138">
    <property type="entry name" value="HprK N-terminal domain-like"/>
    <property type="match status" value="1"/>
</dbReference>
<dbReference type="SUPFAM" id="SSF53795">
    <property type="entry name" value="PEP carboxykinase-like"/>
    <property type="match status" value="1"/>
</dbReference>
<gene>
    <name evidence="1" type="primary">hprK</name>
    <name type="ordered locus">Cbei_1408</name>
</gene>
<organism>
    <name type="scientific">Clostridium beijerinckii (strain ATCC 51743 / NCIMB 8052)</name>
    <name type="common">Clostridium acetobutylicum</name>
    <dbReference type="NCBI Taxonomy" id="290402"/>
    <lineage>
        <taxon>Bacteria</taxon>
        <taxon>Bacillati</taxon>
        <taxon>Bacillota</taxon>
        <taxon>Clostridia</taxon>
        <taxon>Eubacteriales</taxon>
        <taxon>Clostridiaceae</taxon>
        <taxon>Clostridium</taxon>
    </lineage>
</organism>